<sequence>MIVTGSQVRQGLNTWFVLPLRRTAIGLGCAGVATLFSACGQTQALITNQTIQGFVDQVVVPSYVSVAAGATQLEQALQTYQQAPTAANLEAARQAWRVARDRWEQTECFAFGPADSEGFDGAMDTWPIDRQGLKTAAAQPVEQREDSRKGFHAIEELLFAATEPTLSDRQHLVILATDLTKQAQGLVTRWQQASDQPAYRSVLLSAGSTDSAYPTLNAAGTEIVQGLVDSLSEVASEKIGGPLETQEPDRFESFVSRNTLSDLRNNWTGAWNVYRGQRSDGVAAGSLQQRLQQQHPVIAQQLDQQFATARQALWAIPEPIETNLASPRGKVAVLTAQTAIAAVSDTLERQVLPLVQ</sequence>
<dbReference type="EMBL" id="M22058">
    <property type="protein sequence ID" value="AAA27316.1"/>
    <property type="molecule type" value="Genomic_DNA"/>
</dbReference>
<dbReference type="EMBL" id="CP000100">
    <property type="protein sequence ID" value="ABB57492.1"/>
    <property type="molecule type" value="Genomic_DNA"/>
</dbReference>
<dbReference type="RefSeq" id="WP_011242408.1">
    <property type="nucleotide sequence ID" value="NZ_JACJTX010000004.1"/>
</dbReference>
<dbReference type="SMR" id="P12608"/>
<dbReference type="STRING" id="1140.Synpcc7942_1462"/>
<dbReference type="PaxDb" id="1140-Synpcc7942_1462"/>
<dbReference type="KEGG" id="syf:Synpcc7942_1462"/>
<dbReference type="eggNOG" id="COG3487">
    <property type="taxonomic scope" value="Bacteria"/>
</dbReference>
<dbReference type="HOGENOM" id="CLU_050043_0_0_3"/>
<dbReference type="OrthoDB" id="9764688at2"/>
<dbReference type="BioCyc" id="SYNEL:SYNPCC7942_1462-MONOMER"/>
<dbReference type="Proteomes" id="UP000889800">
    <property type="component" value="Chromosome"/>
</dbReference>
<dbReference type="GO" id="GO:0005886">
    <property type="term" value="C:plasma membrane"/>
    <property type="evidence" value="ECO:0007669"/>
    <property type="project" value="UniProtKB-SubCell"/>
</dbReference>
<dbReference type="CDD" id="cd14658">
    <property type="entry name" value="Imelysin-like_IrpA"/>
    <property type="match status" value="1"/>
</dbReference>
<dbReference type="Gene3D" id="1.20.1420.20">
    <property type="entry name" value="M75 peptidase, HXXE motif"/>
    <property type="match status" value="1"/>
</dbReference>
<dbReference type="InterPro" id="IPR018976">
    <property type="entry name" value="Imelysin-like"/>
</dbReference>
<dbReference type="InterPro" id="IPR034982">
    <property type="entry name" value="Imelysin-like_IrpA"/>
</dbReference>
<dbReference type="InterPro" id="IPR038352">
    <property type="entry name" value="Imelysin_sf"/>
</dbReference>
<dbReference type="Pfam" id="PF09375">
    <property type="entry name" value="Peptidase_M75"/>
    <property type="match status" value="1"/>
</dbReference>
<gene>
    <name type="primary">irpA</name>
    <name type="ordered locus">Synpcc7942_1462</name>
</gene>
<comment type="function">
    <text>IrpA occurs under iron-deficient growth conditions in cyanobacterium Synechococcus and disappears in cells recovering from iron starvation. It seems to be involved in iron acquisition, uptake or storage.</text>
</comment>
<comment type="subunit">
    <text>The iron-regulated protein A is one unit of the protein complex CPVI-4, which is synthesized under iron deficient conditions.</text>
</comment>
<comment type="subcellular location">
    <subcellularLocation>
        <location>Cell inner membrane</location>
    </subcellularLocation>
</comment>
<comment type="induction">
    <text>By iron deprivation.</text>
</comment>
<accession>P12608</accession>
<accession>Q31N77</accession>
<reference key="1">
    <citation type="journal article" date="1988" name="J. Bacteriol.">
        <title>Cloning, nucleotide sequence, and mutagenesis of a gene (irpA) involved in iron-deficient growth of the cyanobacterium Synechococcus sp. strain PCC7942.</title>
        <authorList>
            <person name="Reddy K.J."/>
            <person name="Bullerjahn G.S."/>
            <person name="Sherman D.M."/>
            <person name="Sherman L.A."/>
        </authorList>
    </citation>
    <scope>NUCLEOTIDE SEQUENCE [GENOMIC DNA]</scope>
</reference>
<reference key="2">
    <citation type="submission" date="2005-08" db="EMBL/GenBank/DDBJ databases">
        <title>Complete sequence of chromosome 1 of Synechococcus elongatus PCC 7942.</title>
        <authorList>
            <consortium name="US DOE Joint Genome Institute"/>
            <person name="Copeland A."/>
            <person name="Lucas S."/>
            <person name="Lapidus A."/>
            <person name="Barry K."/>
            <person name="Detter J.C."/>
            <person name="Glavina T."/>
            <person name="Hammon N."/>
            <person name="Israni S."/>
            <person name="Pitluck S."/>
            <person name="Schmutz J."/>
            <person name="Larimer F."/>
            <person name="Land M."/>
            <person name="Kyrpides N."/>
            <person name="Lykidis A."/>
            <person name="Golden S."/>
            <person name="Richardson P."/>
        </authorList>
    </citation>
    <scope>NUCLEOTIDE SEQUENCE [LARGE SCALE GENOMIC DNA]</scope>
    <source>
        <strain>ATCC 33912 / PCC 7942 / FACHB-805</strain>
    </source>
</reference>
<proteinExistence type="evidence at transcript level"/>
<feature type="signal peptide">
    <location>
        <begin position="1"/>
        <end position="44"/>
    </location>
</feature>
<feature type="chain" id="PRO_0000021525" description="Iron-regulated protein A">
    <location>
        <begin position="45"/>
        <end position="356"/>
    </location>
</feature>
<feature type="region of interest" description="Hydrophilic">
    <location>
        <begin position="75"/>
        <end position="145"/>
    </location>
</feature>
<feature type="region of interest" description="Hydrophilic">
    <location>
        <begin position="240"/>
        <end position="310"/>
    </location>
</feature>
<organism>
    <name type="scientific">Synechococcus elongatus (strain ATCC 33912 / PCC 7942 / FACHB-805)</name>
    <name type="common">Anacystis nidulans R2</name>
    <dbReference type="NCBI Taxonomy" id="1140"/>
    <lineage>
        <taxon>Bacteria</taxon>
        <taxon>Bacillati</taxon>
        <taxon>Cyanobacteriota</taxon>
        <taxon>Cyanophyceae</taxon>
        <taxon>Synechococcales</taxon>
        <taxon>Synechococcaceae</taxon>
        <taxon>Synechococcus</taxon>
    </lineage>
</organism>
<keyword id="KW-0997">Cell inner membrane</keyword>
<keyword id="KW-1003">Cell membrane</keyword>
<keyword id="KW-0408">Iron</keyword>
<keyword id="KW-0472">Membrane</keyword>
<keyword id="KW-1185">Reference proteome</keyword>
<keyword id="KW-0732">Signal</keyword>
<keyword id="KW-0812">Transmembrane</keyword>
<name>IRPA_SYNE7</name>
<protein>
    <recommendedName>
        <fullName>Iron-regulated protein A</fullName>
    </recommendedName>
</protein>